<proteinExistence type="inferred from homology"/>
<comment type="function">
    <text evidence="1">This enzyme is involved in nucleotide metabolism: it produces dUMP, the immediate precursor of thymidine nucleotides and it decreases the intracellular concentration of dUTP so that uracil cannot be incorporated into DNA.</text>
</comment>
<comment type="catalytic activity">
    <reaction evidence="1">
        <text>dUTP + H2O = dUMP + diphosphate + H(+)</text>
        <dbReference type="Rhea" id="RHEA:10248"/>
        <dbReference type="ChEBI" id="CHEBI:15377"/>
        <dbReference type="ChEBI" id="CHEBI:15378"/>
        <dbReference type="ChEBI" id="CHEBI:33019"/>
        <dbReference type="ChEBI" id="CHEBI:61555"/>
        <dbReference type="ChEBI" id="CHEBI:246422"/>
        <dbReference type="EC" id="3.6.1.23"/>
    </reaction>
</comment>
<comment type="cofactor">
    <cofactor evidence="1">
        <name>Mg(2+)</name>
        <dbReference type="ChEBI" id="CHEBI:18420"/>
    </cofactor>
</comment>
<comment type="pathway">
    <text evidence="1">Pyrimidine metabolism; dUMP biosynthesis; dUMP from dCTP (dUTP route): step 2/2.</text>
</comment>
<comment type="similarity">
    <text evidence="1">Belongs to the dUTPase family.</text>
</comment>
<keyword id="KW-0378">Hydrolase</keyword>
<keyword id="KW-0460">Magnesium</keyword>
<keyword id="KW-0479">Metal-binding</keyword>
<keyword id="KW-0546">Nucleotide metabolism</keyword>
<dbReference type="EC" id="3.6.1.23" evidence="1"/>
<dbReference type="EMBL" id="CP000444">
    <property type="protein sequence ID" value="ABI41360.1"/>
    <property type="molecule type" value="Genomic_DNA"/>
</dbReference>
<dbReference type="SMR" id="Q0HZU5"/>
<dbReference type="KEGG" id="shm:Shewmr7_0357"/>
<dbReference type="HOGENOM" id="CLU_068508_1_1_6"/>
<dbReference type="UniPathway" id="UPA00610">
    <property type="reaction ID" value="UER00666"/>
</dbReference>
<dbReference type="GO" id="GO:0004170">
    <property type="term" value="F:dUTP diphosphatase activity"/>
    <property type="evidence" value="ECO:0007669"/>
    <property type="project" value="UniProtKB-UniRule"/>
</dbReference>
<dbReference type="GO" id="GO:0000287">
    <property type="term" value="F:magnesium ion binding"/>
    <property type="evidence" value="ECO:0007669"/>
    <property type="project" value="UniProtKB-UniRule"/>
</dbReference>
<dbReference type="GO" id="GO:0006226">
    <property type="term" value="P:dUMP biosynthetic process"/>
    <property type="evidence" value="ECO:0007669"/>
    <property type="project" value="UniProtKB-UniRule"/>
</dbReference>
<dbReference type="GO" id="GO:0046081">
    <property type="term" value="P:dUTP catabolic process"/>
    <property type="evidence" value="ECO:0007669"/>
    <property type="project" value="InterPro"/>
</dbReference>
<dbReference type="CDD" id="cd07557">
    <property type="entry name" value="trimeric_dUTPase"/>
    <property type="match status" value="1"/>
</dbReference>
<dbReference type="FunFam" id="2.70.40.10:FF:000002">
    <property type="entry name" value="dUTP diphosphatase"/>
    <property type="match status" value="1"/>
</dbReference>
<dbReference type="Gene3D" id="2.70.40.10">
    <property type="match status" value="1"/>
</dbReference>
<dbReference type="HAMAP" id="MF_00116">
    <property type="entry name" value="dUTPase_bact"/>
    <property type="match status" value="1"/>
</dbReference>
<dbReference type="InterPro" id="IPR008181">
    <property type="entry name" value="dUTPase"/>
</dbReference>
<dbReference type="InterPro" id="IPR029054">
    <property type="entry name" value="dUTPase-like"/>
</dbReference>
<dbReference type="InterPro" id="IPR036157">
    <property type="entry name" value="dUTPase-like_sf"/>
</dbReference>
<dbReference type="InterPro" id="IPR033704">
    <property type="entry name" value="dUTPase_trimeric"/>
</dbReference>
<dbReference type="NCBIfam" id="TIGR00576">
    <property type="entry name" value="dut"/>
    <property type="match status" value="1"/>
</dbReference>
<dbReference type="NCBIfam" id="NF001862">
    <property type="entry name" value="PRK00601.1"/>
    <property type="match status" value="1"/>
</dbReference>
<dbReference type="PANTHER" id="PTHR11241">
    <property type="entry name" value="DEOXYURIDINE 5'-TRIPHOSPHATE NUCLEOTIDOHYDROLASE"/>
    <property type="match status" value="1"/>
</dbReference>
<dbReference type="PANTHER" id="PTHR11241:SF0">
    <property type="entry name" value="DEOXYURIDINE 5'-TRIPHOSPHATE NUCLEOTIDOHYDROLASE"/>
    <property type="match status" value="1"/>
</dbReference>
<dbReference type="Pfam" id="PF00692">
    <property type="entry name" value="dUTPase"/>
    <property type="match status" value="1"/>
</dbReference>
<dbReference type="SUPFAM" id="SSF51283">
    <property type="entry name" value="dUTPase-like"/>
    <property type="match status" value="1"/>
</dbReference>
<feature type="chain" id="PRO_1000015520" description="Deoxyuridine 5'-triphosphate nucleotidohydrolase">
    <location>
        <begin position="1"/>
        <end position="152"/>
    </location>
</feature>
<feature type="binding site" evidence="1">
    <location>
        <begin position="71"/>
        <end position="73"/>
    </location>
    <ligand>
        <name>substrate</name>
    </ligand>
</feature>
<feature type="binding site" evidence="1">
    <location>
        <position position="84"/>
    </location>
    <ligand>
        <name>substrate</name>
    </ligand>
</feature>
<feature type="binding site" evidence="1">
    <location>
        <begin position="88"/>
        <end position="90"/>
    </location>
    <ligand>
        <name>substrate</name>
    </ligand>
</feature>
<feature type="binding site" evidence="1">
    <location>
        <position position="98"/>
    </location>
    <ligand>
        <name>substrate</name>
    </ligand>
</feature>
<name>DUT_SHESR</name>
<accession>Q0HZU5</accession>
<organism>
    <name type="scientific">Shewanella sp. (strain MR-7)</name>
    <dbReference type="NCBI Taxonomy" id="60481"/>
    <lineage>
        <taxon>Bacteria</taxon>
        <taxon>Pseudomonadati</taxon>
        <taxon>Pseudomonadota</taxon>
        <taxon>Gammaproteobacteria</taxon>
        <taxon>Alteromonadales</taxon>
        <taxon>Shewanellaceae</taxon>
        <taxon>Shewanella</taxon>
    </lineage>
</organism>
<evidence type="ECO:0000255" key="1">
    <source>
        <dbReference type="HAMAP-Rule" id="MF_00116"/>
    </source>
</evidence>
<reference key="1">
    <citation type="submission" date="2006-08" db="EMBL/GenBank/DDBJ databases">
        <title>Complete sequence of chromosome 1 of Shewanella sp. MR-7.</title>
        <authorList>
            <person name="Copeland A."/>
            <person name="Lucas S."/>
            <person name="Lapidus A."/>
            <person name="Barry K."/>
            <person name="Detter J.C."/>
            <person name="Glavina del Rio T."/>
            <person name="Hammon N."/>
            <person name="Israni S."/>
            <person name="Dalin E."/>
            <person name="Tice H."/>
            <person name="Pitluck S."/>
            <person name="Kiss H."/>
            <person name="Brettin T."/>
            <person name="Bruce D."/>
            <person name="Han C."/>
            <person name="Tapia R."/>
            <person name="Gilna P."/>
            <person name="Schmutz J."/>
            <person name="Larimer F."/>
            <person name="Land M."/>
            <person name="Hauser L."/>
            <person name="Kyrpides N."/>
            <person name="Mikhailova N."/>
            <person name="Nealson K."/>
            <person name="Konstantinidis K."/>
            <person name="Klappenbach J."/>
            <person name="Tiedje J."/>
            <person name="Richardson P."/>
        </authorList>
    </citation>
    <scope>NUCLEOTIDE SEQUENCE [LARGE SCALE GENOMIC DNA]</scope>
    <source>
        <strain>MR-7</strain>
    </source>
</reference>
<protein>
    <recommendedName>
        <fullName evidence="1">Deoxyuridine 5'-triphosphate nucleotidohydrolase</fullName>
        <shortName evidence="1">dUTPase</shortName>
        <ecNumber evidence="1">3.6.1.23</ecNumber>
    </recommendedName>
    <alternativeName>
        <fullName evidence="1">dUTP pyrophosphatase</fullName>
    </alternativeName>
</protein>
<gene>
    <name evidence="1" type="primary">dut</name>
    <name type="ordered locus">Shewmr7_0357</name>
</gene>
<sequence length="152" mass="16156">MKTPIELKILDSRIGSEFPLPAYATLGSAGMDLRAMIDTTMTIAPGETQLIPTGIAIHVADPGLAAVLLPRSGLGHKHGIVLGNLVGLIDSDYQGPLMVSCWNRSDIPFTLEIGDRLAQLVFVPVVQAQFKLVDEFDSSDRGEGGFGHSGTK</sequence>